<reference key="1">
    <citation type="journal article" date="2009" name="PLoS Biol.">
        <title>Lineage-specific biology revealed by a finished genome assembly of the mouse.</title>
        <authorList>
            <person name="Church D.M."/>
            <person name="Goodstadt L."/>
            <person name="Hillier L.W."/>
            <person name="Zody M.C."/>
            <person name="Goldstein S."/>
            <person name="She X."/>
            <person name="Bult C.J."/>
            <person name="Agarwala R."/>
            <person name="Cherry J.L."/>
            <person name="DiCuccio M."/>
            <person name="Hlavina W."/>
            <person name="Kapustin Y."/>
            <person name="Meric P."/>
            <person name="Maglott D."/>
            <person name="Birtle Z."/>
            <person name="Marques A.C."/>
            <person name="Graves T."/>
            <person name="Zhou S."/>
            <person name="Teague B."/>
            <person name="Potamousis K."/>
            <person name="Churas C."/>
            <person name="Place M."/>
            <person name="Herschleb J."/>
            <person name="Runnheim R."/>
            <person name="Forrest D."/>
            <person name="Amos-Landgraf J."/>
            <person name="Schwartz D.C."/>
            <person name="Cheng Z."/>
            <person name="Lindblad-Toh K."/>
            <person name="Eichler E.E."/>
            <person name="Ponting C.P."/>
        </authorList>
    </citation>
    <scope>NUCLEOTIDE SEQUENCE [LARGE SCALE GENOMIC DNA]</scope>
    <source>
        <strain>C57BL/6J</strain>
    </source>
</reference>
<dbReference type="EC" id="2.7.11.1"/>
<dbReference type="EMBL" id="AC157563">
    <property type="status" value="NOT_ANNOTATED_CDS"/>
    <property type="molecule type" value="Genomic_DNA"/>
</dbReference>
<dbReference type="CCDS" id="CCDS51980.1"/>
<dbReference type="RefSeq" id="NP_001139801.1">
    <property type="nucleotide sequence ID" value="NM_001146329.2"/>
</dbReference>
<dbReference type="RefSeq" id="XP_006540202.1">
    <property type="nucleotide sequence ID" value="XM_006540139.3"/>
</dbReference>
<dbReference type="SMR" id="P0C5K1"/>
<dbReference type="FunCoup" id="P0C5K1">
    <property type="interactions" value="220"/>
</dbReference>
<dbReference type="STRING" id="10090.ENSMUSP00000138504"/>
<dbReference type="jPOST" id="P0C5K1"/>
<dbReference type="PaxDb" id="10090-ENSMUSP00000138504"/>
<dbReference type="ProteomicsDB" id="255461"/>
<dbReference type="Antibodypedia" id="33118">
    <property type="antibodies" value="44 antibodies from 15 providers"/>
</dbReference>
<dbReference type="DNASU" id="381836"/>
<dbReference type="Ensembl" id="ENSMUST00000032598.14">
    <property type="protein sequence ID" value="ENSMUSP00000032598.8"/>
    <property type="gene ID" value="ENSMUSG00000030433.16"/>
</dbReference>
<dbReference type="Ensembl" id="ENSMUST00000182214.8">
    <property type="protein sequence ID" value="ENSMUSP00000138504.2"/>
    <property type="gene ID" value="ENSMUSG00000030433.16"/>
</dbReference>
<dbReference type="GeneID" id="381836"/>
<dbReference type="KEGG" id="mmu:381836"/>
<dbReference type="UCSC" id="uc012exa.1">
    <property type="organism name" value="mouse"/>
</dbReference>
<dbReference type="AGR" id="MGI:2685925"/>
<dbReference type="CTD" id="646643"/>
<dbReference type="MGI" id="MGI:2685925">
    <property type="gene designation" value="Sbk2"/>
</dbReference>
<dbReference type="VEuPathDB" id="HostDB:ENSMUSG00000030433"/>
<dbReference type="eggNOG" id="KOG1345">
    <property type="taxonomic scope" value="Eukaryota"/>
</dbReference>
<dbReference type="GeneTree" id="ENSGT00940000161663"/>
<dbReference type="HOGENOM" id="CLU_000288_10_0_1"/>
<dbReference type="InParanoid" id="P0C5K1"/>
<dbReference type="OMA" id="HRQKGTT"/>
<dbReference type="OrthoDB" id="6513151at2759"/>
<dbReference type="PhylomeDB" id="P0C5K1"/>
<dbReference type="TreeFam" id="TF326736"/>
<dbReference type="BioGRID-ORCS" id="381836">
    <property type="hits" value="3 hits in 79 CRISPR screens"/>
</dbReference>
<dbReference type="PRO" id="PR:P0C5K1"/>
<dbReference type="Proteomes" id="UP000000589">
    <property type="component" value="Chromosome 7"/>
</dbReference>
<dbReference type="RNAct" id="P0C5K1">
    <property type="molecule type" value="protein"/>
</dbReference>
<dbReference type="Bgee" id="ENSMUSG00000030433">
    <property type="expression patterns" value="Expressed in zone of skin and 24 other cell types or tissues"/>
</dbReference>
<dbReference type="ExpressionAtlas" id="P0C5K1">
    <property type="expression patterns" value="baseline and differential"/>
</dbReference>
<dbReference type="GO" id="GO:0005524">
    <property type="term" value="F:ATP binding"/>
    <property type="evidence" value="ECO:0007669"/>
    <property type="project" value="UniProtKB-KW"/>
</dbReference>
<dbReference type="GO" id="GO:0106310">
    <property type="term" value="F:protein serine kinase activity"/>
    <property type="evidence" value="ECO:0007669"/>
    <property type="project" value="RHEA"/>
</dbReference>
<dbReference type="GO" id="GO:0004674">
    <property type="term" value="F:protein serine/threonine kinase activity"/>
    <property type="evidence" value="ECO:0007669"/>
    <property type="project" value="UniProtKB-KW"/>
</dbReference>
<dbReference type="FunFam" id="1.10.510.10:FF:000515">
    <property type="entry name" value="serine/threonine-protein kinase SBK2"/>
    <property type="match status" value="1"/>
</dbReference>
<dbReference type="Gene3D" id="1.10.510.10">
    <property type="entry name" value="Transferase(Phosphotransferase) domain 1"/>
    <property type="match status" value="1"/>
</dbReference>
<dbReference type="InterPro" id="IPR011009">
    <property type="entry name" value="Kinase-like_dom_sf"/>
</dbReference>
<dbReference type="InterPro" id="IPR000719">
    <property type="entry name" value="Prot_kinase_dom"/>
</dbReference>
<dbReference type="InterPro" id="IPR017441">
    <property type="entry name" value="Protein_kinase_ATP_BS"/>
</dbReference>
<dbReference type="InterPro" id="IPR008271">
    <property type="entry name" value="Ser/Thr_kinase_AS"/>
</dbReference>
<dbReference type="PANTHER" id="PTHR24359:SF34">
    <property type="entry name" value="PROTEIN KINASE DOMAIN-CONTAINING PROTEIN"/>
    <property type="match status" value="1"/>
</dbReference>
<dbReference type="PANTHER" id="PTHR24359">
    <property type="entry name" value="SERINE/THREONINE-PROTEIN KINASE SBK1"/>
    <property type="match status" value="1"/>
</dbReference>
<dbReference type="Pfam" id="PF00069">
    <property type="entry name" value="Pkinase"/>
    <property type="match status" value="1"/>
</dbReference>
<dbReference type="SMART" id="SM00220">
    <property type="entry name" value="S_TKc"/>
    <property type="match status" value="1"/>
</dbReference>
<dbReference type="SUPFAM" id="SSF56112">
    <property type="entry name" value="Protein kinase-like (PK-like)"/>
    <property type="match status" value="1"/>
</dbReference>
<dbReference type="PROSITE" id="PS00107">
    <property type="entry name" value="PROTEIN_KINASE_ATP"/>
    <property type="match status" value="1"/>
</dbReference>
<dbReference type="PROSITE" id="PS50011">
    <property type="entry name" value="PROTEIN_KINASE_DOM"/>
    <property type="match status" value="1"/>
</dbReference>
<dbReference type="PROSITE" id="PS00108">
    <property type="entry name" value="PROTEIN_KINASE_ST"/>
    <property type="match status" value="1"/>
</dbReference>
<feature type="chain" id="PRO_0000308264" description="Serine/threonine-protein kinase SBK2">
    <location>
        <begin position="1"/>
        <end position="362"/>
    </location>
</feature>
<feature type="domain" description="Protein kinase" evidence="1">
    <location>
        <begin position="62"/>
        <end position="330"/>
    </location>
</feature>
<feature type="region of interest" description="Disordered" evidence="3">
    <location>
        <begin position="1"/>
        <end position="26"/>
    </location>
</feature>
<feature type="region of interest" description="Disordered" evidence="3">
    <location>
        <begin position="329"/>
        <end position="362"/>
    </location>
</feature>
<feature type="compositionally biased region" description="Basic and acidic residues" evidence="3">
    <location>
        <begin position="1"/>
        <end position="11"/>
    </location>
</feature>
<feature type="active site" description="Proton acceptor" evidence="1 2">
    <location>
        <position position="183"/>
    </location>
</feature>
<feature type="binding site" evidence="1">
    <location>
        <begin position="68"/>
        <end position="76"/>
    </location>
    <ligand>
        <name>ATP</name>
        <dbReference type="ChEBI" id="CHEBI:30616"/>
    </ligand>
</feature>
<feature type="binding site" evidence="1">
    <location>
        <position position="91"/>
    </location>
    <ligand>
        <name>ATP</name>
        <dbReference type="ChEBI" id="CHEBI:30616"/>
    </ligand>
</feature>
<organism>
    <name type="scientific">Mus musculus</name>
    <name type="common">Mouse</name>
    <dbReference type="NCBI Taxonomy" id="10090"/>
    <lineage>
        <taxon>Eukaryota</taxon>
        <taxon>Metazoa</taxon>
        <taxon>Chordata</taxon>
        <taxon>Craniata</taxon>
        <taxon>Vertebrata</taxon>
        <taxon>Euteleostomi</taxon>
        <taxon>Mammalia</taxon>
        <taxon>Eutheria</taxon>
        <taxon>Euarchontoglires</taxon>
        <taxon>Glires</taxon>
        <taxon>Rodentia</taxon>
        <taxon>Myomorpha</taxon>
        <taxon>Muroidea</taxon>
        <taxon>Muridae</taxon>
        <taxon>Murinae</taxon>
        <taxon>Mus</taxon>
        <taxon>Mus</taxon>
    </lineage>
</organism>
<keyword id="KW-0067">ATP-binding</keyword>
<keyword id="KW-0418">Kinase</keyword>
<keyword id="KW-0547">Nucleotide-binding</keyword>
<keyword id="KW-1185">Reference proteome</keyword>
<keyword id="KW-0677">Repeat</keyword>
<keyword id="KW-0723">Serine/threonine-protein kinase</keyword>
<keyword id="KW-0808">Transferase</keyword>
<proteinExistence type="inferred from homology"/>
<protein>
    <recommendedName>
        <fullName>Serine/threonine-protein kinase SBK2</fullName>
        <ecNumber>2.7.11.1</ecNumber>
    </recommendedName>
    <alternativeName>
        <fullName>SH3 domain-binding kinase family member 2</fullName>
    </alternativeName>
    <alternativeName>
        <fullName>Sugen kinase 69</fullName>
        <shortName>SgK069</shortName>
    </alternativeName>
</protein>
<gene>
    <name type="primary">Sbk2</name>
    <name type="synonym">Sgk069</name>
</gene>
<accession>P0C5K1</accession>
<accession>E9QLZ2</accession>
<sequence>MPGKQSEDKPMEVSTVEDGGDEGLGGLTVEELQQGQEAALALEDMMALSAQTLVQTEVEELYEEVRPLGQGRFGRVLLVTHRQKGTPLALKQLPKQSTSLRGFLYEFCVGLSLGTHSAIVTAYGIGIESANSYSFLTEPVLHGDLITFIQPKVGLPQPAAQRCAAQLASALEHIHSHGLVYRDLKPENVLVCDPACQRVKLTDFGHTRPRGTLLRLTGPPIPYTAPELCAPPPLPEGLPIQPSLDAWALGVLIFCLLTGYFPWDQPLVEVDPFFEDFLIWQASGQPQDRPQPWYSLSPAADTLLWGLLDPHPRKRNPVGSIKSYLGQPWKQREGEAEELATELREDGWRGGQEAAKGEQPAC</sequence>
<name>SBK2_MOUSE</name>
<comment type="catalytic activity">
    <reaction>
        <text>L-seryl-[protein] + ATP = O-phospho-L-seryl-[protein] + ADP + H(+)</text>
        <dbReference type="Rhea" id="RHEA:17989"/>
        <dbReference type="Rhea" id="RHEA-COMP:9863"/>
        <dbReference type="Rhea" id="RHEA-COMP:11604"/>
        <dbReference type="ChEBI" id="CHEBI:15378"/>
        <dbReference type="ChEBI" id="CHEBI:29999"/>
        <dbReference type="ChEBI" id="CHEBI:30616"/>
        <dbReference type="ChEBI" id="CHEBI:83421"/>
        <dbReference type="ChEBI" id="CHEBI:456216"/>
        <dbReference type="EC" id="2.7.11.1"/>
    </reaction>
</comment>
<comment type="catalytic activity">
    <reaction>
        <text>L-threonyl-[protein] + ATP = O-phospho-L-threonyl-[protein] + ADP + H(+)</text>
        <dbReference type="Rhea" id="RHEA:46608"/>
        <dbReference type="Rhea" id="RHEA-COMP:11060"/>
        <dbReference type="Rhea" id="RHEA-COMP:11605"/>
        <dbReference type="ChEBI" id="CHEBI:15378"/>
        <dbReference type="ChEBI" id="CHEBI:30013"/>
        <dbReference type="ChEBI" id="CHEBI:30616"/>
        <dbReference type="ChEBI" id="CHEBI:61977"/>
        <dbReference type="ChEBI" id="CHEBI:456216"/>
        <dbReference type="EC" id="2.7.11.1"/>
    </reaction>
</comment>
<comment type="similarity">
    <text evidence="1">Belongs to the protein kinase superfamily. Ser/Thr protein kinase family. STKL subfamily.</text>
</comment>
<evidence type="ECO:0000255" key="1">
    <source>
        <dbReference type="PROSITE-ProRule" id="PRU00159"/>
    </source>
</evidence>
<evidence type="ECO:0000255" key="2">
    <source>
        <dbReference type="PROSITE-ProRule" id="PRU10027"/>
    </source>
</evidence>
<evidence type="ECO:0000256" key="3">
    <source>
        <dbReference type="SAM" id="MobiDB-lite"/>
    </source>
</evidence>